<keyword id="KW-0113">Calvin cycle</keyword>
<keyword id="KW-0120">Carbon dioxide fixation</keyword>
<keyword id="KW-0150">Chloroplast</keyword>
<keyword id="KW-0601">Photorespiration</keyword>
<keyword id="KW-0602">Photosynthesis</keyword>
<keyword id="KW-0934">Plastid</keyword>
<keyword id="KW-0809">Transit peptide</keyword>
<comment type="function">
    <text evidence="1">RuBisCO catalyzes two reactions: the carboxylation of D-ribulose 1,5-bisphosphate, the primary event in carbon dioxide fixation, as well as the oxidative fragmentation of the pentose substrate. Both reactions occur simultaneously and in competition at the same active site. Although the small subunit is not catalytic it is essential for maximal activity.</text>
</comment>
<comment type="subunit">
    <text evidence="1">Heterohexadecamer of 8 large and 8 small subunits.</text>
</comment>
<comment type="subcellular location">
    <subcellularLocation>
        <location evidence="1">Plastid</location>
        <location evidence="1">Chloroplast</location>
    </subcellularLocation>
</comment>
<comment type="miscellaneous">
    <text evidence="1">The basic functional RuBisCO is composed of a large chain homodimer in a 'head-to-tail' conformation. In form I RuBisCO this homodimer is arranged in a barrel-like tetramer with the small subunits forming a tetrameric 'cap' on each end of the 'barrel'.</text>
</comment>
<comment type="similarity">
    <text evidence="1">Belongs to the RuBisCO small chain family.</text>
</comment>
<accession>P26985</accession>
<dbReference type="EMBL" id="X57266">
    <property type="protein sequence ID" value="CAA40538.1"/>
    <property type="molecule type" value="mRNA"/>
</dbReference>
<dbReference type="PIR" id="S18022">
    <property type="entry name" value="S18022"/>
</dbReference>
<dbReference type="SMR" id="P26985"/>
<dbReference type="GO" id="GO:0009507">
    <property type="term" value="C:chloroplast"/>
    <property type="evidence" value="ECO:0007669"/>
    <property type="project" value="UniProtKB-SubCell"/>
</dbReference>
<dbReference type="GO" id="GO:0016984">
    <property type="term" value="F:ribulose-bisphosphate carboxylase activity"/>
    <property type="evidence" value="ECO:0007669"/>
    <property type="project" value="UniProtKB-UniRule"/>
</dbReference>
<dbReference type="GO" id="GO:0009853">
    <property type="term" value="P:photorespiration"/>
    <property type="evidence" value="ECO:0007669"/>
    <property type="project" value="UniProtKB-KW"/>
</dbReference>
<dbReference type="GO" id="GO:0019253">
    <property type="term" value="P:reductive pentose-phosphate cycle"/>
    <property type="evidence" value="ECO:0007669"/>
    <property type="project" value="UniProtKB-UniRule"/>
</dbReference>
<dbReference type="CDD" id="cd03527">
    <property type="entry name" value="RuBisCO_small"/>
    <property type="match status" value="1"/>
</dbReference>
<dbReference type="FunFam" id="3.30.190.10:FF:000001">
    <property type="entry name" value="Ribulose bisphosphate carboxylase small chain, chloroplastic"/>
    <property type="match status" value="1"/>
</dbReference>
<dbReference type="Gene3D" id="3.30.190.10">
    <property type="entry name" value="Ribulose bisphosphate carboxylase, small subunit"/>
    <property type="match status" value="1"/>
</dbReference>
<dbReference type="HAMAP" id="MF_00859">
    <property type="entry name" value="RuBisCO_S_bact"/>
    <property type="match status" value="1"/>
</dbReference>
<dbReference type="InterPro" id="IPR024681">
    <property type="entry name" value="RuBisCO_ssu"/>
</dbReference>
<dbReference type="InterPro" id="IPR000894">
    <property type="entry name" value="RuBisCO_ssu_dom"/>
</dbReference>
<dbReference type="InterPro" id="IPR036385">
    <property type="entry name" value="RuBisCO_ssu_sf"/>
</dbReference>
<dbReference type="PANTHER" id="PTHR31262">
    <property type="entry name" value="RIBULOSE BISPHOSPHATE CARBOXYLASE SMALL CHAIN 1, CHLOROPLASTIC"/>
    <property type="match status" value="1"/>
</dbReference>
<dbReference type="PANTHER" id="PTHR31262:SF0">
    <property type="entry name" value="RIBULOSE BISPHOSPHATE CARBOXYLASE SMALL SUBUNIT, CHLOROPLASTIC 1"/>
    <property type="match status" value="1"/>
</dbReference>
<dbReference type="Pfam" id="PF00101">
    <property type="entry name" value="RuBisCO_small"/>
    <property type="match status" value="1"/>
</dbReference>
<dbReference type="PRINTS" id="PR00152">
    <property type="entry name" value="RUBISCOSMALL"/>
</dbReference>
<dbReference type="SMART" id="SM00961">
    <property type="entry name" value="RuBisCO_small"/>
    <property type="match status" value="1"/>
</dbReference>
<dbReference type="SUPFAM" id="SSF55239">
    <property type="entry name" value="RuBisCO, small subunit"/>
    <property type="match status" value="1"/>
</dbReference>
<protein>
    <recommendedName>
        <fullName evidence="1">Ribulose bisphosphate carboxylase small subunit, chloroplastic</fullName>
        <shortName evidence="1">RuBisCO small subunit</shortName>
    </recommendedName>
</protein>
<reference key="1">
    <citation type="journal article" date="1991" name="Curr. Genet.">
        <title>Sequences of two rbcS cDNA clones of Batophora oerstedii: structural and evolutionary considerations.</title>
        <authorList>
            <person name="Schneider S.U."/>
            <person name="de Groot E.J."/>
        </authorList>
    </citation>
    <scope>NUCLEOTIDE SEQUENCE [MRNA]</scope>
</reference>
<feature type="transit peptide" description="Chloroplast" evidence="1">
    <location>
        <begin position="1"/>
        <end position="34"/>
    </location>
</feature>
<feature type="chain" id="PRO_0000031467" description="Ribulose bisphosphate carboxylase small subunit, chloroplastic" evidence="1">
    <location>
        <begin position="35"/>
        <end position="175"/>
    </location>
</feature>
<organism>
    <name type="scientific">Batophora oerstedii</name>
    <name type="common">Green alga</name>
    <dbReference type="NCBI Taxonomy" id="3140"/>
    <lineage>
        <taxon>Eukaryota</taxon>
        <taxon>Viridiplantae</taxon>
        <taxon>Chlorophyta</taxon>
        <taxon>Ulvophyceae</taxon>
        <taxon>TCBD clade</taxon>
        <taxon>Dasycladales</taxon>
        <taxon>Dasycladaceae</taxon>
        <taxon>Batophora</taxon>
    </lineage>
</organism>
<evidence type="ECO:0000255" key="1">
    <source>
        <dbReference type="HAMAP-Rule" id="MF_00860"/>
    </source>
</evidence>
<proteinExistence type="evidence at transcript level"/>
<name>RBS_BATOE</name>
<sequence>MSFATTNKTIVPCATTKQIVRPRFLSNGTISKSRAMMVWEPFNNKFFETFSYLPPLTDDQITKQVDYILRNNWTPCLEFAGSDQAYVTHDNTVRMGDCASTYQDNRYWTMWKLPMFGCIDGSQVLTEISACTKAFPDAYIRLVCFDANRQVQISGFLVHRPESATDYRLPADRQV</sequence>
<gene>
    <name evidence="1" type="primary">RBCS</name>
</gene>